<evidence type="ECO:0000255" key="1">
    <source>
        <dbReference type="HAMAP-Rule" id="MF_00191"/>
    </source>
</evidence>
<accession>Q9RSG0</accession>
<proteinExistence type="inferred from homology"/>
<sequence>MIERIYLAKPRGFCAGVVMAIQAVEKAAVREDKPVTVYHSIVHNHTVVERLSEGGRVHFVEDLDAVDALPDSGDTVIFSAHGISPAVRERARSLGLSTIDATCPLVTKVHTEAKKYAREGYTILLIGDSAGHQEVIGTRGEAPENTILVGVLGKTGPGLNDPHAVQVPDPERLVVLTQTTLSVDDTRKTVDILKARFPALVVPPSEDLCYATKNRQDAVKNIAPNVDAFLVLTSTHSSNGMRLLELAEAECGRAYRLETAADLTRLEQNGDLGGVRSVGITSAASTPDDLVQDVVAHFRALNPALEVIEEGEWENIEFREPKKIAPTQELPRTMQ</sequence>
<gene>
    <name evidence="1" type="primary">ispH</name>
    <name type="synonym">lytB</name>
    <name type="ordered locus">DR_2164</name>
</gene>
<comment type="function">
    <text evidence="1">Catalyzes the conversion of 1-hydroxy-2-methyl-2-(E)-butenyl 4-diphosphate (HMBPP) into a mixture of isopentenyl diphosphate (IPP) and dimethylallyl diphosphate (DMAPP). Acts in the terminal step of the DOXP/MEP pathway for isoprenoid precursor biosynthesis.</text>
</comment>
<comment type="catalytic activity">
    <reaction evidence="1">
        <text>isopentenyl diphosphate + 2 oxidized [2Fe-2S]-[ferredoxin] + H2O = (2E)-4-hydroxy-3-methylbut-2-enyl diphosphate + 2 reduced [2Fe-2S]-[ferredoxin] + 2 H(+)</text>
        <dbReference type="Rhea" id="RHEA:24488"/>
        <dbReference type="Rhea" id="RHEA-COMP:10000"/>
        <dbReference type="Rhea" id="RHEA-COMP:10001"/>
        <dbReference type="ChEBI" id="CHEBI:15377"/>
        <dbReference type="ChEBI" id="CHEBI:15378"/>
        <dbReference type="ChEBI" id="CHEBI:33737"/>
        <dbReference type="ChEBI" id="CHEBI:33738"/>
        <dbReference type="ChEBI" id="CHEBI:128753"/>
        <dbReference type="ChEBI" id="CHEBI:128769"/>
        <dbReference type="EC" id="1.17.7.4"/>
    </reaction>
</comment>
<comment type="catalytic activity">
    <reaction evidence="1">
        <text>dimethylallyl diphosphate + 2 oxidized [2Fe-2S]-[ferredoxin] + H2O = (2E)-4-hydroxy-3-methylbut-2-enyl diphosphate + 2 reduced [2Fe-2S]-[ferredoxin] + 2 H(+)</text>
        <dbReference type="Rhea" id="RHEA:24825"/>
        <dbReference type="Rhea" id="RHEA-COMP:10000"/>
        <dbReference type="Rhea" id="RHEA-COMP:10001"/>
        <dbReference type="ChEBI" id="CHEBI:15377"/>
        <dbReference type="ChEBI" id="CHEBI:15378"/>
        <dbReference type="ChEBI" id="CHEBI:33737"/>
        <dbReference type="ChEBI" id="CHEBI:33738"/>
        <dbReference type="ChEBI" id="CHEBI:57623"/>
        <dbReference type="ChEBI" id="CHEBI:128753"/>
        <dbReference type="EC" id="1.17.7.4"/>
    </reaction>
</comment>
<comment type="cofactor">
    <cofactor evidence="1">
        <name>[4Fe-4S] cluster</name>
        <dbReference type="ChEBI" id="CHEBI:49883"/>
    </cofactor>
    <text evidence="1">Binds 1 [4Fe-4S] cluster per subunit.</text>
</comment>
<comment type="pathway">
    <text evidence="1">Isoprenoid biosynthesis; dimethylallyl diphosphate biosynthesis; dimethylallyl diphosphate from (2E)-4-hydroxy-3-methylbutenyl diphosphate: step 1/1.</text>
</comment>
<comment type="pathway">
    <text evidence="1">Isoprenoid biosynthesis; isopentenyl diphosphate biosynthesis via DXP pathway; isopentenyl diphosphate from 1-deoxy-D-xylulose 5-phosphate: step 6/6.</text>
</comment>
<comment type="similarity">
    <text evidence="1">Belongs to the IspH family.</text>
</comment>
<reference key="1">
    <citation type="journal article" date="1999" name="Science">
        <title>Genome sequence of the radioresistant bacterium Deinococcus radiodurans R1.</title>
        <authorList>
            <person name="White O."/>
            <person name="Eisen J.A."/>
            <person name="Heidelberg J.F."/>
            <person name="Hickey E.K."/>
            <person name="Peterson J.D."/>
            <person name="Dodson R.J."/>
            <person name="Haft D.H."/>
            <person name="Gwinn M.L."/>
            <person name="Nelson W.C."/>
            <person name="Richardson D.L."/>
            <person name="Moffat K.S."/>
            <person name="Qin H."/>
            <person name="Jiang L."/>
            <person name="Pamphile W."/>
            <person name="Crosby M."/>
            <person name="Shen M."/>
            <person name="Vamathevan J.J."/>
            <person name="Lam P."/>
            <person name="McDonald L.A."/>
            <person name="Utterback T.R."/>
            <person name="Zalewski C."/>
            <person name="Makarova K.S."/>
            <person name="Aravind L."/>
            <person name="Daly M.J."/>
            <person name="Minton K.W."/>
            <person name="Fleischmann R.D."/>
            <person name="Ketchum K.A."/>
            <person name="Nelson K.E."/>
            <person name="Salzberg S.L."/>
            <person name="Smith H.O."/>
            <person name="Venter J.C."/>
            <person name="Fraser C.M."/>
        </authorList>
    </citation>
    <scope>NUCLEOTIDE SEQUENCE [LARGE SCALE GENOMIC DNA]</scope>
    <source>
        <strain>ATCC 13939 / DSM 20539 / JCM 16871 / CCUG 27074 / LMG 4051 / NBRC 15346 / NCIMB 9279 / VKM B-1422 / R1</strain>
    </source>
</reference>
<protein>
    <recommendedName>
        <fullName evidence="1">4-hydroxy-3-methylbut-2-enyl diphosphate reductase</fullName>
        <shortName evidence="1">HMBPP reductase</shortName>
        <ecNumber evidence="1">1.17.7.4</ecNumber>
    </recommendedName>
</protein>
<keyword id="KW-0004">4Fe-4S</keyword>
<keyword id="KW-0408">Iron</keyword>
<keyword id="KW-0411">Iron-sulfur</keyword>
<keyword id="KW-0414">Isoprene biosynthesis</keyword>
<keyword id="KW-0479">Metal-binding</keyword>
<keyword id="KW-0560">Oxidoreductase</keyword>
<keyword id="KW-1185">Reference proteome</keyword>
<organism>
    <name type="scientific">Deinococcus radiodurans (strain ATCC 13939 / DSM 20539 / JCM 16871 / CCUG 27074 / LMG 4051 / NBRC 15346 / NCIMB 9279 / VKM B-1422 / R1)</name>
    <dbReference type="NCBI Taxonomy" id="243230"/>
    <lineage>
        <taxon>Bacteria</taxon>
        <taxon>Thermotogati</taxon>
        <taxon>Deinococcota</taxon>
        <taxon>Deinococci</taxon>
        <taxon>Deinococcales</taxon>
        <taxon>Deinococcaceae</taxon>
        <taxon>Deinococcus</taxon>
    </lineage>
</organism>
<dbReference type="EC" id="1.17.7.4" evidence="1"/>
<dbReference type="EMBL" id="AE000513">
    <property type="protein sequence ID" value="AAF11707.1"/>
    <property type="molecule type" value="Genomic_DNA"/>
</dbReference>
<dbReference type="PIR" id="G75309">
    <property type="entry name" value="G75309"/>
</dbReference>
<dbReference type="RefSeq" id="NP_295887.1">
    <property type="nucleotide sequence ID" value="NC_001263.1"/>
</dbReference>
<dbReference type="RefSeq" id="WP_010888795.1">
    <property type="nucleotide sequence ID" value="NC_001263.1"/>
</dbReference>
<dbReference type="SMR" id="Q9RSG0"/>
<dbReference type="FunCoup" id="Q9RSG0">
    <property type="interactions" value="292"/>
</dbReference>
<dbReference type="STRING" id="243230.DR_2164"/>
<dbReference type="PaxDb" id="243230-DR_2164"/>
<dbReference type="EnsemblBacteria" id="AAF11707">
    <property type="protein sequence ID" value="AAF11707"/>
    <property type="gene ID" value="DR_2164"/>
</dbReference>
<dbReference type="GeneID" id="69518405"/>
<dbReference type="KEGG" id="dra:DR_2164"/>
<dbReference type="PATRIC" id="fig|243230.17.peg.2388"/>
<dbReference type="eggNOG" id="COG0761">
    <property type="taxonomic scope" value="Bacteria"/>
</dbReference>
<dbReference type="HOGENOM" id="CLU_027486_1_0_0"/>
<dbReference type="InParanoid" id="Q9RSG0"/>
<dbReference type="OrthoDB" id="9777362at2"/>
<dbReference type="UniPathway" id="UPA00056">
    <property type="reaction ID" value="UER00097"/>
</dbReference>
<dbReference type="UniPathway" id="UPA00059">
    <property type="reaction ID" value="UER00105"/>
</dbReference>
<dbReference type="Proteomes" id="UP000002524">
    <property type="component" value="Chromosome 1"/>
</dbReference>
<dbReference type="GO" id="GO:0005829">
    <property type="term" value="C:cytosol"/>
    <property type="evidence" value="ECO:0000318"/>
    <property type="project" value="GO_Central"/>
</dbReference>
<dbReference type="GO" id="GO:0051539">
    <property type="term" value="F:4 iron, 4 sulfur cluster binding"/>
    <property type="evidence" value="ECO:0007669"/>
    <property type="project" value="UniProtKB-UniRule"/>
</dbReference>
<dbReference type="GO" id="GO:0051745">
    <property type="term" value="F:4-hydroxy-3-methylbut-2-enyl diphosphate reductase activity"/>
    <property type="evidence" value="ECO:0000318"/>
    <property type="project" value="GO_Central"/>
</dbReference>
<dbReference type="GO" id="GO:0046872">
    <property type="term" value="F:metal ion binding"/>
    <property type="evidence" value="ECO:0007669"/>
    <property type="project" value="UniProtKB-KW"/>
</dbReference>
<dbReference type="GO" id="GO:0050992">
    <property type="term" value="P:dimethylallyl diphosphate biosynthetic process"/>
    <property type="evidence" value="ECO:0007669"/>
    <property type="project" value="UniProtKB-UniRule"/>
</dbReference>
<dbReference type="GO" id="GO:0019288">
    <property type="term" value="P:isopentenyl diphosphate biosynthetic process, methylerythritol 4-phosphate pathway"/>
    <property type="evidence" value="ECO:0000318"/>
    <property type="project" value="GO_Central"/>
</dbReference>
<dbReference type="GO" id="GO:0016114">
    <property type="term" value="P:terpenoid biosynthetic process"/>
    <property type="evidence" value="ECO:0007669"/>
    <property type="project" value="UniProtKB-UniRule"/>
</dbReference>
<dbReference type="CDD" id="cd13944">
    <property type="entry name" value="lytB_ispH"/>
    <property type="match status" value="1"/>
</dbReference>
<dbReference type="Gene3D" id="3.40.50.11270">
    <property type="match status" value="1"/>
</dbReference>
<dbReference type="Gene3D" id="3.40.1010.20">
    <property type="entry name" value="4-hydroxy-3-methylbut-2-enyl diphosphate reductase, catalytic domain"/>
    <property type="match status" value="2"/>
</dbReference>
<dbReference type="HAMAP" id="MF_00191">
    <property type="entry name" value="IspH"/>
    <property type="match status" value="1"/>
</dbReference>
<dbReference type="InterPro" id="IPR003451">
    <property type="entry name" value="LytB/IspH"/>
</dbReference>
<dbReference type="NCBIfam" id="TIGR00216">
    <property type="entry name" value="ispH_lytB"/>
    <property type="match status" value="1"/>
</dbReference>
<dbReference type="PANTHER" id="PTHR30426">
    <property type="entry name" value="4-HYDROXY-3-METHYLBUT-2-ENYL DIPHOSPHATE REDUCTASE"/>
    <property type="match status" value="1"/>
</dbReference>
<dbReference type="PANTHER" id="PTHR30426:SF0">
    <property type="entry name" value="4-HYDROXY-3-METHYLBUT-2-ENYL DIPHOSPHATE REDUCTASE"/>
    <property type="match status" value="1"/>
</dbReference>
<dbReference type="Pfam" id="PF02401">
    <property type="entry name" value="LYTB"/>
    <property type="match status" value="1"/>
</dbReference>
<name>ISPH_DEIRA</name>
<feature type="chain" id="PRO_0000128809" description="4-hydroxy-3-methylbut-2-enyl diphosphate reductase">
    <location>
        <begin position="1"/>
        <end position="335"/>
    </location>
</feature>
<feature type="active site" description="Proton donor" evidence="1">
    <location>
        <position position="134"/>
    </location>
</feature>
<feature type="binding site" evidence="1">
    <location>
        <position position="14"/>
    </location>
    <ligand>
        <name>[4Fe-4S] cluster</name>
        <dbReference type="ChEBI" id="CHEBI:49883"/>
    </ligand>
</feature>
<feature type="binding site" evidence="1">
    <location>
        <position position="43"/>
    </location>
    <ligand>
        <name>(2E)-4-hydroxy-3-methylbut-2-enyl diphosphate</name>
        <dbReference type="ChEBI" id="CHEBI:128753"/>
    </ligand>
</feature>
<feature type="binding site" evidence="1">
    <location>
        <position position="43"/>
    </location>
    <ligand>
        <name>dimethylallyl diphosphate</name>
        <dbReference type="ChEBI" id="CHEBI:57623"/>
    </ligand>
</feature>
<feature type="binding site" evidence="1">
    <location>
        <position position="43"/>
    </location>
    <ligand>
        <name>isopentenyl diphosphate</name>
        <dbReference type="ChEBI" id="CHEBI:128769"/>
    </ligand>
</feature>
<feature type="binding site" evidence="1">
    <location>
        <position position="81"/>
    </location>
    <ligand>
        <name>(2E)-4-hydroxy-3-methylbut-2-enyl diphosphate</name>
        <dbReference type="ChEBI" id="CHEBI:128753"/>
    </ligand>
</feature>
<feature type="binding site" evidence="1">
    <location>
        <position position="81"/>
    </location>
    <ligand>
        <name>dimethylallyl diphosphate</name>
        <dbReference type="ChEBI" id="CHEBI:57623"/>
    </ligand>
</feature>
<feature type="binding site" evidence="1">
    <location>
        <position position="81"/>
    </location>
    <ligand>
        <name>isopentenyl diphosphate</name>
        <dbReference type="ChEBI" id="CHEBI:128769"/>
    </ligand>
</feature>
<feature type="binding site" evidence="1">
    <location>
        <position position="103"/>
    </location>
    <ligand>
        <name>[4Fe-4S] cluster</name>
        <dbReference type="ChEBI" id="CHEBI:49883"/>
    </ligand>
</feature>
<feature type="binding site" evidence="1">
    <location>
        <position position="132"/>
    </location>
    <ligand>
        <name>(2E)-4-hydroxy-3-methylbut-2-enyl diphosphate</name>
        <dbReference type="ChEBI" id="CHEBI:128753"/>
    </ligand>
</feature>
<feature type="binding site" evidence="1">
    <location>
        <position position="132"/>
    </location>
    <ligand>
        <name>dimethylallyl diphosphate</name>
        <dbReference type="ChEBI" id="CHEBI:57623"/>
    </ligand>
</feature>
<feature type="binding site" evidence="1">
    <location>
        <position position="132"/>
    </location>
    <ligand>
        <name>isopentenyl diphosphate</name>
        <dbReference type="ChEBI" id="CHEBI:128769"/>
    </ligand>
</feature>
<feature type="binding site" evidence="1">
    <location>
        <position position="179"/>
    </location>
    <ligand>
        <name>(2E)-4-hydroxy-3-methylbut-2-enyl diphosphate</name>
        <dbReference type="ChEBI" id="CHEBI:128753"/>
    </ligand>
</feature>
<feature type="binding site" evidence="1">
    <location>
        <position position="209"/>
    </location>
    <ligand>
        <name>[4Fe-4S] cluster</name>
        <dbReference type="ChEBI" id="CHEBI:49883"/>
    </ligand>
</feature>
<feature type="binding site" evidence="1">
    <location>
        <position position="237"/>
    </location>
    <ligand>
        <name>(2E)-4-hydroxy-3-methylbut-2-enyl diphosphate</name>
        <dbReference type="ChEBI" id="CHEBI:128753"/>
    </ligand>
</feature>
<feature type="binding site" evidence="1">
    <location>
        <position position="237"/>
    </location>
    <ligand>
        <name>dimethylallyl diphosphate</name>
        <dbReference type="ChEBI" id="CHEBI:57623"/>
    </ligand>
</feature>
<feature type="binding site" evidence="1">
    <location>
        <position position="237"/>
    </location>
    <ligand>
        <name>isopentenyl diphosphate</name>
        <dbReference type="ChEBI" id="CHEBI:128769"/>
    </ligand>
</feature>
<feature type="binding site" evidence="1">
    <location>
        <position position="238"/>
    </location>
    <ligand>
        <name>(2E)-4-hydroxy-3-methylbut-2-enyl diphosphate</name>
        <dbReference type="ChEBI" id="CHEBI:128753"/>
    </ligand>
</feature>
<feature type="binding site" evidence="1">
    <location>
        <position position="238"/>
    </location>
    <ligand>
        <name>dimethylallyl diphosphate</name>
        <dbReference type="ChEBI" id="CHEBI:57623"/>
    </ligand>
</feature>
<feature type="binding site" evidence="1">
    <location>
        <position position="238"/>
    </location>
    <ligand>
        <name>isopentenyl diphosphate</name>
        <dbReference type="ChEBI" id="CHEBI:128769"/>
    </ligand>
</feature>
<feature type="binding site" evidence="1">
    <location>
        <position position="239"/>
    </location>
    <ligand>
        <name>(2E)-4-hydroxy-3-methylbut-2-enyl diphosphate</name>
        <dbReference type="ChEBI" id="CHEBI:128753"/>
    </ligand>
</feature>
<feature type="binding site" evidence="1">
    <location>
        <position position="239"/>
    </location>
    <ligand>
        <name>dimethylallyl diphosphate</name>
        <dbReference type="ChEBI" id="CHEBI:57623"/>
    </ligand>
</feature>
<feature type="binding site" evidence="1">
    <location>
        <position position="239"/>
    </location>
    <ligand>
        <name>isopentenyl diphosphate</name>
        <dbReference type="ChEBI" id="CHEBI:128769"/>
    </ligand>
</feature>
<feature type="binding site" evidence="1">
    <location>
        <position position="285"/>
    </location>
    <ligand>
        <name>(2E)-4-hydroxy-3-methylbut-2-enyl diphosphate</name>
        <dbReference type="ChEBI" id="CHEBI:128753"/>
    </ligand>
</feature>
<feature type="binding site" evidence="1">
    <location>
        <position position="285"/>
    </location>
    <ligand>
        <name>dimethylallyl diphosphate</name>
        <dbReference type="ChEBI" id="CHEBI:57623"/>
    </ligand>
</feature>
<feature type="binding site" evidence="1">
    <location>
        <position position="285"/>
    </location>
    <ligand>
        <name>isopentenyl diphosphate</name>
        <dbReference type="ChEBI" id="CHEBI:128769"/>
    </ligand>
</feature>